<proteinExistence type="evidence at transcript level"/>
<protein>
    <recommendedName>
        <fullName evidence="5">Late embryogenesis abundant protein M17</fullName>
        <shortName evidence="5">AtM17</shortName>
    </recommendedName>
</protein>
<name>M17_ARATH</name>
<gene>
    <name evidence="5" type="primary">M17</name>
    <name evidence="8" type="ordered locus">At2g41260</name>
</gene>
<keyword id="KW-0025">Alternative splicing</keyword>
<keyword id="KW-0325">Glycoprotein</keyword>
<keyword id="KW-1185">Reference proteome</keyword>
<keyword id="KW-0677">Repeat</keyword>
<keyword id="KW-0732">Signal</keyword>
<dbReference type="EMBL" id="AF076979">
    <property type="protein sequence ID" value="AAC27641.1"/>
    <property type="molecule type" value="Genomic_DNA"/>
</dbReference>
<dbReference type="EMBL" id="AC005662">
    <property type="protein sequence ID" value="AAC78545.1"/>
    <property type="molecule type" value="Genomic_DNA"/>
</dbReference>
<dbReference type="EMBL" id="CP002685">
    <property type="protein sequence ID" value="AEC09954.1"/>
    <property type="molecule type" value="Genomic_DNA"/>
</dbReference>
<dbReference type="EMBL" id="CP002685">
    <property type="protein sequence ID" value="AEC09955.1"/>
    <property type="molecule type" value="Genomic_DNA"/>
</dbReference>
<dbReference type="EMBL" id="AY128274">
    <property type="protein sequence ID" value="AAM91083.1"/>
    <property type="molecule type" value="mRNA"/>
</dbReference>
<dbReference type="PIR" id="G84839">
    <property type="entry name" value="G84839"/>
</dbReference>
<dbReference type="RefSeq" id="NP_181659.2">
    <molecule id="Q9S7S3-2"/>
    <property type="nucleotide sequence ID" value="NM_129691.3"/>
</dbReference>
<dbReference type="RefSeq" id="NP_973656.1">
    <molecule id="Q9S7S3-1"/>
    <property type="nucleotide sequence ID" value="NM_201927.3"/>
</dbReference>
<dbReference type="STRING" id="3702.Q9S7S3"/>
<dbReference type="GlyCosmos" id="Q9S7S3">
    <property type="glycosylation" value="1 site, No reported glycans"/>
</dbReference>
<dbReference type="GlyGen" id="Q9S7S3">
    <property type="glycosylation" value="1 site"/>
</dbReference>
<dbReference type="PaxDb" id="3702-AT2G41260.2"/>
<dbReference type="ProteomicsDB" id="238759">
    <molecule id="Q9S7S3-1"/>
</dbReference>
<dbReference type="EnsemblPlants" id="AT2G41260.1">
    <molecule id="Q9S7S3-2"/>
    <property type="protein sequence ID" value="AT2G41260.1"/>
    <property type="gene ID" value="AT2G41260"/>
</dbReference>
<dbReference type="EnsemblPlants" id="AT2G41260.2">
    <molecule id="Q9S7S3-1"/>
    <property type="protein sequence ID" value="AT2G41260.2"/>
    <property type="gene ID" value="AT2G41260"/>
</dbReference>
<dbReference type="GeneID" id="818725"/>
<dbReference type="Gramene" id="AT2G41260.1">
    <molecule id="Q9S7S3-2"/>
    <property type="protein sequence ID" value="AT2G41260.1"/>
    <property type="gene ID" value="AT2G41260"/>
</dbReference>
<dbReference type="Gramene" id="AT2G41260.2">
    <molecule id="Q9S7S3-1"/>
    <property type="protein sequence ID" value="AT2G41260.2"/>
    <property type="gene ID" value="AT2G41260"/>
</dbReference>
<dbReference type="KEGG" id="ath:AT2G41260"/>
<dbReference type="Araport" id="AT2G41260"/>
<dbReference type="TAIR" id="AT2G41260">
    <property type="gene designation" value="M17"/>
</dbReference>
<dbReference type="InParanoid" id="Q9S7S3"/>
<dbReference type="OMA" id="CRYCCRT"/>
<dbReference type="OrthoDB" id="1110017at2759"/>
<dbReference type="PhylomeDB" id="Q9S7S3"/>
<dbReference type="PRO" id="PR:Q9S7S3"/>
<dbReference type="Proteomes" id="UP000006548">
    <property type="component" value="Chromosome 2"/>
</dbReference>
<dbReference type="ExpressionAtlas" id="Q9S7S3">
    <property type="expression patterns" value="baseline and differential"/>
</dbReference>
<dbReference type="GO" id="GO:0005773">
    <property type="term" value="C:vacuole"/>
    <property type="evidence" value="ECO:0007005"/>
    <property type="project" value="TAIR"/>
</dbReference>
<dbReference type="GO" id="GO:0009793">
    <property type="term" value="P:embryo development ending in seed dormancy"/>
    <property type="evidence" value="ECO:0000304"/>
    <property type="project" value="TAIR"/>
</dbReference>
<accession>Q9S7S3</accession>
<accession>Q8L7T1</accession>
<comment type="function">
    <text evidence="7">May be involved in the acquisition of desiccation tolerance during late phase of embryogenesis.</text>
</comment>
<comment type="alternative products">
    <event type="alternative splicing"/>
    <isoform>
        <id>Q9S7S3-1</id>
        <name>1</name>
        <sequence type="displayed"/>
    </isoform>
    <isoform>
        <id>Q9S7S3-2</id>
        <name>2</name>
        <sequence type="described" ref="VSP_058881"/>
    </isoform>
</comment>
<comment type="developmental stage">
    <text evidence="4">Expressed exclusively in seeds from late embryogenesis until 1 day after imbibition.</text>
</comment>
<comment type="induction">
    <text evidence="4">Induced by cold stress.</text>
</comment>
<sequence>MGNLKSLVLLALLFSFSVAVFANTSNDATHDEVKPSTEATHAIEAQKHDGKPQIAEAQVEANDPVVEPQQDWGGRGGCRWGCCGGWWRGRCRYCCRSQAEASEVVETVEPNDVEPQQGGRGGGGGGGGGRGGCRWGCCGGWWRGRCRYCCRSQAEASEVVETVEPNDVEPQQGGRGGGGGGGGGRGGCRWGCCGGWWRGRCRYCCRSQAEASEVVETVEPNDVEPQQGGRGGGGGGGGGRGGCRWGCCGGWWRGRCRYCCRSQAEANEVVETVEAQQAKP</sequence>
<feature type="signal peptide" evidence="1">
    <location>
        <begin position="1"/>
        <end position="22"/>
    </location>
</feature>
<feature type="chain" id="PRO_5009348827" description="Late embryogenesis abundant protein M17">
    <location>
        <begin position="23"/>
        <end position="280"/>
    </location>
</feature>
<feature type="repeat" description="1" evidence="6">
    <location>
        <begin position="76"/>
        <end position="97"/>
    </location>
</feature>
<feature type="repeat" description="2" evidence="6">
    <location>
        <begin position="131"/>
        <end position="152"/>
    </location>
</feature>
<feature type="repeat" description="3" evidence="6">
    <location>
        <begin position="186"/>
        <end position="207"/>
    </location>
</feature>
<feature type="repeat" description="4" evidence="6">
    <location>
        <begin position="241"/>
        <end position="262"/>
    </location>
</feature>
<feature type="region of interest" description="4 X 22 AA repeats, Cys-rich" evidence="6">
    <location>
        <begin position="76"/>
        <end position="262"/>
    </location>
</feature>
<feature type="region of interest" description="Disordered" evidence="3">
    <location>
        <begin position="163"/>
        <end position="184"/>
    </location>
</feature>
<feature type="region of interest" description="Disordered" evidence="3">
    <location>
        <begin position="218"/>
        <end position="239"/>
    </location>
</feature>
<feature type="compositionally biased region" description="Gly residues" evidence="3">
    <location>
        <begin position="173"/>
        <end position="184"/>
    </location>
</feature>
<feature type="compositionally biased region" description="Gly residues" evidence="3">
    <location>
        <begin position="228"/>
        <end position="239"/>
    </location>
</feature>
<feature type="glycosylation site" description="N-linked (GlcNAc...) asparagine" evidence="2">
    <location>
        <position position="23"/>
    </location>
</feature>
<feature type="splice variant" id="VSP_058881" description="In isoform 2.">
    <location>
        <begin position="73"/>
        <end position="127"/>
    </location>
</feature>
<evidence type="ECO:0000255" key="1"/>
<evidence type="ECO:0000255" key="2">
    <source>
        <dbReference type="PROSITE-ProRule" id="PRU00498"/>
    </source>
</evidence>
<evidence type="ECO:0000256" key="3">
    <source>
        <dbReference type="SAM" id="MobiDB-lite"/>
    </source>
</evidence>
<evidence type="ECO:0000269" key="4">
    <source>
    </source>
</evidence>
<evidence type="ECO:0000303" key="5">
    <source>
    </source>
</evidence>
<evidence type="ECO:0000305" key="6"/>
<evidence type="ECO:0000305" key="7">
    <source>
    </source>
</evidence>
<evidence type="ECO:0000312" key="8">
    <source>
        <dbReference type="Araport" id="AT2G41260"/>
    </source>
</evidence>
<organism>
    <name type="scientific">Arabidopsis thaliana</name>
    <name type="common">Mouse-ear cress</name>
    <dbReference type="NCBI Taxonomy" id="3702"/>
    <lineage>
        <taxon>Eukaryota</taxon>
        <taxon>Viridiplantae</taxon>
        <taxon>Streptophyta</taxon>
        <taxon>Embryophyta</taxon>
        <taxon>Tracheophyta</taxon>
        <taxon>Spermatophyta</taxon>
        <taxon>Magnoliopsida</taxon>
        <taxon>eudicotyledons</taxon>
        <taxon>Gunneridae</taxon>
        <taxon>Pentapetalae</taxon>
        <taxon>rosids</taxon>
        <taxon>malvids</taxon>
        <taxon>Brassicales</taxon>
        <taxon>Brassicaceae</taxon>
        <taxon>Camelineae</taxon>
        <taxon>Arabidopsis</taxon>
    </lineage>
</organism>
<reference key="1">
    <citation type="journal article" date="1999" name="Plant Mol. Biol.">
        <title>Structure, organization and expression of two closely related novel Lea (late-embryogenesis-abundant) genes in Arabidopsis thaliana.</title>
        <authorList>
            <person name="Raynal M."/>
            <person name="Guilleminot J."/>
            <person name="Gueguen C."/>
            <person name="Cooke R."/>
            <person name="Delseny M."/>
            <person name="Gruber V."/>
        </authorList>
    </citation>
    <scope>NUCLEOTIDE SEQUENCE [GENOMIC DNA]</scope>
    <scope>FUNCTION</scope>
    <scope>DEVELOPMENTAL STAGE</scope>
    <scope>INDUCTION BY COLD STRESS</scope>
    <source>
        <strain>cv. Columbia</strain>
    </source>
</reference>
<reference key="2">
    <citation type="journal article" date="1999" name="Nature">
        <title>Sequence and analysis of chromosome 2 of the plant Arabidopsis thaliana.</title>
        <authorList>
            <person name="Lin X."/>
            <person name="Kaul S."/>
            <person name="Rounsley S.D."/>
            <person name="Shea T.P."/>
            <person name="Benito M.-I."/>
            <person name="Town C.D."/>
            <person name="Fujii C.Y."/>
            <person name="Mason T.M."/>
            <person name="Bowman C.L."/>
            <person name="Barnstead M.E."/>
            <person name="Feldblyum T.V."/>
            <person name="Buell C.R."/>
            <person name="Ketchum K.A."/>
            <person name="Lee J.J."/>
            <person name="Ronning C.M."/>
            <person name="Koo H.L."/>
            <person name="Moffat K.S."/>
            <person name="Cronin L.A."/>
            <person name="Shen M."/>
            <person name="Pai G."/>
            <person name="Van Aken S."/>
            <person name="Umayam L."/>
            <person name="Tallon L.J."/>
            <person name="Gill J.E."/>
            <person name="Adams M.D."/>
            <person name="Carrera A.J."/>
            <person name="Creasy T.H."/>
            <person name="Goodman H.M."/>
            <person name="Somerville C.R."/>
            <person name="Copenhaver G.P."/>
            <person name="Preuss D."/>
            <person name="Nierman W.C."/>
            <person name="White O."/>
            <person name="Eisen J.A."/>
            <person name="Salzberg S.L."/>
            <person name="Fraser C.M."/>
            <person name="Venter J.C."/>
        </authorList>
    </citation>
    <scope>NUCLEOTIDE SEQUENCE [LARGE SCALE GENOMIC DNA]</scope>
    <source>
        <strain>cv. Columbia</strain>
    </source>
</reference>
<reference key="3">
    <citation type="journal article" date="2017" name="Plant J.">
        <title>Araport11: a complete reannotation of the Arabidopsis thaliana reference genome.</title>
        <authorList>
            <person name="Cheng C.Y."/>
            <person name="Krishnakumar V."/>
            <person name="Chan A.P."/>
            <person name="Thibaud-Nissen F."/>
            <person name="Schobel S."/>
            <person name="Town C.D."/>
        </authorList>
    </citation>
    <scope>GENOME REANNOTATION</scope>
    <source>
        <strain>cv. Columbia</strain>
    </source>
</reference>
<reference key="4">
    <citation type="journal article" date="2003" name="Science">
        <title>Empirical analysis of transcriptional activity in the Arabidopsis genome.</title>
        <authorList>
            <person name="Yamada K."/>
            <person name="Lim J."/>
            <person name="Dale J.M."/>
            <person name="Chen H."/>
            <person name="Shinn P."/>
            <person name="Palm C.J."/>
            <person name="Southwick A.M."/>
            <person name="Wu H.C."/>
            <person name="Kim C.J."/>
            <person name="Nguyen M."/>
            <person name="Pham P.K."/>
            <person name="Cheuk R.F."/>
            <person name="Karlin-Newmann G."/>
            <person name="Liu S.X."/>
            <person name="Lam B."/>
            <person name="Sakano H."/>
            <person name="Wu T."/>
            <person name="Yu G."/>
            <person name="Miranda M."/>
            <person name="Quach H.L."/>
            <person name="Tripp M."/>
            <person name="Chang C.H."/>
            <person name="Lee J.M."/>
            <person name="Toriumi M.J."/>
            <person name="Chan M.M."/>
            <person name="Tang C.C."/>
            <person name="Onodera C.S."/>
            <person name="Deng J.M."/>
            <person name="Akiyama K."/>
            <person name="Ansari Y."/>
            <person name="Arakawa T."/>
            <person name="Banh J."/>
            <person name="Banno F."/>
            <person name="Bowser L."/>
            <person name="Brooks S.Y."/>
            <person name="Carninci P."/>
            <person name="Chao Q."/>
            <person name="Choy N."/>
            <person name="Enju A."/>
            <person name="Goldsmith A.D."/>
            <person name="Gurjal M."/>
            <person name="Hansen N.F."/>
            <person name="Hayashizaki Y."/>
            <person name="Johnson-Hopson C."/>
            <person name="Hsuan V.W."/>
            <person name="Iida K."/>
            <person name="Karnes M."/>
            <person name="Khan S."/>
            <person name="Koesema E."/>
            <person name="Ishida J."/>
            <person name="Jiang P.X."/>
            <person name="Jones T."/>
            <person name="Kawai J."/>
            <person name="Kamiya A."/>
            <person name="Meyers C."/>
            <person name="Nakajima M."/>
            <person name="Narusaka M."/>
            <person name="Seki M."/>
            <person name="Sakurai T."/>
            <person name="Satou M."/>
            <person name="Tamse R."/>
            <person name="Vaysberg M."/>
            <person name="Wallender E.K."/>
            <person name="Wong C."/>
            <person name="Yamamura Y."/>
            <person name="Yuan S."/>
            <person name="Shinozaki K."/>
            <person name="Davis R.W."/>
            <person name="Theologis A."/>
            <person name="Ecker J.R."/>
        </authorList>
    </citation>
    <scope>NUCLEOTIDE SEQUENCE [LARGE SCALE MRNA] (ISOFORM 2)</scope>
    <source>
        <strain>cv. Columbia</strain>
    </source>
</reference>